<comment type="function">
    <text evidence="1">The 26S proteasome is involved in the ATP-dependent degradation of ubiquitinated proteins. The regulatory (or ATPase) complex confers ATP dependency and substrate specificity to the 26S complex (By similarity).</text>
</comment>
<comment type="subcellular location">
    <subcellularLocation>
        <location evidence="5">Cytoplasm</location>
    </subcellularLocation>
    <subcellularLocation>
        <location evidence="5">Nucleus</location>
    </subcellularLocation>
</comment>
<comment type="alternative products">
    <event type="alternative splicing"/>
    <isoform>
        <id>P46465-1</id>
        <name>1</name>
        <sequence type="displayed"/>
    </isoform>
    <isoform>
        <id>P46465-2</id>
        <name>2</name>
        <sequence type="described" ref="VSP_019502"/>
    </isoform>
</comment>
<comment type="similarity">
    <text evidence="5">Belongs to the AAA ATPase family.</text>
</comment>
<feature type="chain" id="PRO_0000084706" description="26S proteasome regulatory subunit 6A homolog">
    <location>
        <begin position="1"/>
        <end position="429"/>
    </location>
</feature>
<feature type="region of interest" description="Disordered" evidence="3">
    <location>
        <begin position="1"/>
        <end position="21"/>
    </location>
</feature>
<feature type="binding site" evidence="2">
    <location>
        <begin position="217"/>
        <end position="224"/>
    </location>
    <ligand>
        <name>ATP</name>
        <dbReference type="ChEBI" id="CHEBI:30616"/>
    </ligand>
</feature>
<feature type="splice variant" id="VSP_019502" description="In isoform 2." evidence="4">
    <location>
        <begin position="1"/>
        <end position="164"/>
    </location>
</feature>
<feature type="sequence conflict" description="In Ref. 1; BAA04614." evidence="5" ref="1">
    <original>D</original>
    <variation>N</variation>
    <location>
        <position position="29"/>
    </location>
</feature>
<evidence type="ECO:0000250" key="1"/>
<evidence type="ECO:0000255" key="2"/>
<evidence type="ECO:0000256" key="3">
    <source>
        <dbReference type="SAM" id="MobiDB-lite"/>
    </source>
</evidence>
<evidence type="ECO:0000303" key="4">
    <source>
    </source>
</evidence>
<evidence type="ECO:0000305" key="5"/>
<gene>
    <name type="primary">TBP1</name>
    <name type="synonym">OsRPT5a</name>
    <name type="ordered locus">Os02g0803700</name>
    <name type="ordered locus">LOC_Os02g56000</name>
    <name type="ORF">P0689B12.30</name>
</gene>
<keyword id="KW-0025">Alternative splicing</keyword>
<keyword id="KW-0067">ATP-binding</keyword>
<keyword id="KW-0963">Cytoplasm</keyword>
<keyword id="KW-0547">Nucleotide-binding</keyword>
<keyword id="KW-0539">Nucleus</keyword>
<keyword id="KW-0647">Proteasome</keyword>
<keyword id="KW-1185">Reference proteome</keyword>
<accession>P46465</accession>
<accession>Q0DWP6</accession>
<accession>Q69SI9</accession>
<accession>Q8W421</accession>
<sequence>MSSPPPAAAAAMAVDDADDDQLASMSTEDIVRATRLLDNETRVLKDELQRTNLEVESYKEKIKENQEKIKLNKQLPYLVGNIVEILEMNPEDEAEEDGANIDLDSQRKGKCVVLKTSTRQTIFLPVIGLVDPEKLKPGDLVGVNKDSYLILDTLPSEYDSRVKAMEVDEKPTEDYNDIGGLEKQIQELVEAIVLPMTHKDRFQKLGIRPPKGVLLYGPPGTGKTLMARACAAQTNATFLKLAGPQLVQMFIGDGAKLVRDAFQLAKEKSPCIIFIDEIDAIGTKRFDSEVSGDREVQRTMLELLNQLDGFSSDERIKVIAATNRADILDPALMRSGRLDRKIEFPHPSEEARARILQIHSRKMNVNPDVNFEELARSTDDFNGAQLKAVCVEAGMLALRRDATEVTHEDFNEGIIQVQAKKKSSLNYYA</sequence>
<name>PRS6A_ORYSJ</name>
<protein>
    <recommendedName>
        <fullName>26S proteasome regulatory subunit 6A homolog</fullName>
    </recommendedName>
    <alternativeName>
        <fullName>Tat-binding protein homolog 1</fullName>
        <shortName>TBP-1</shortName>
    </alternativeName>
</protein>
<reference key="1">
    <citation type="journal article" date="1994" name="Plant Sci.">
        <title>Identification of cDNA clones for rice homologs of the human immunodeficiency virus-1 Tat binding protein and subunit 4 of human 26S protease (proteasome).</title>
        <authorList>
            <person name="Suzuka I."/>
            <person name="Koga-Ban Y."/>
            <person name="Sasaki T."/>
            <person name="Minobe Y."/>
            <person name="Hashimoto J."/>
        </authorList>
    </citation>
    <scope>NUCLEOTIDE SEQUENCE [MRNA] (ISOFORM 1)</scope>
    <source>
        <strain>cv. Nipponbare</strain>
        <tissue>Callus</tissue>
    </source>
</reference>
<reference key="2">
    <citation type="journal article" date="2002" name="Eur. J. Biochem.">
        <title>Identification of the 19S regulatory particle subunits from the rice 26S proteasome.</title>
        <authorList>
            <person name="Shibahara T."/>
            <person name="Kawasaki H."/>
            <person name="Hirano H."/>
        </authorList>
    </citation>
    <scope>NUCLEOTIDE SEQUENCE [MRNA] (ISOFORM 1)</scope>
</reference>
<reference key="3">
    <citation type="journal article" date="2005" name="Nature">
        <title>The map-based sequence of the rice genome.</title>
        <authorList>
            <consortium name="International rice genome sequencing project (IRGSP)"/>
        </authorList>
    </citation>
    <scope>NUCLEOTIDE SEQUENCE [LARGE SCALE GENOMIC DNA]</scope>
    <source>
        <strain>cv. Nipponbare</strain>
    </source>
</reference>
<reference key="4">
    <citation type="journal article" date="2008" name="Nucleic Acids Res.">
        <title>The rice annotation project database (RAP-DB): 2008 update.</title>
        <authorList>
            <consortium name="The rice annotation project (RAP)"/>
        </authorList>
    </citation>
    <scope>GENOME REANNOTATION</scope>
    <source>
        <strain>cv. Nipponbare</strain>
    </source>
</reference>
<reference key="5">
    <citation type="journal article" date="2013" name="Rice">
        <title>Improvement of the Oryza sativa Nipponbare reference genome using next generation sequence and optical map data.</title>
        <authorList>
            <person name="Kawahara Y."/>
            <person name="de la Bastide M."/>
            <person name="Hamilton J.P."/>
            <person name="Kanamori H."/>
            <person name="McCombie W.R."/>
            <person name="Ouyang S."/>
            <person name="Schwartz D.C."/>
            <person name="Tanaka T."/>
            <person name="Wu J."/>
            <person name="Zhou S."/>
            <person name="Childs K.L."/>
            <person name="Davidson R.M."/>
            <person name="Lin H."/>
            <person name="Quesada-Ocampo L."/>
            <person name="Vaillancourt B."/>
            <person name="Sakai H."/>
            <person name="Lee S.S."/>
            <person name="Kim J."/>
            <person name="Numa H."/>
            <person name="Itoh T."/>
            <person name="Buell C.R."/>
            <person name="Matsumoto T."/>
        </authorList>
    </citation>
    <scope>GENOME REANNOTATION</scope>
    <source>
        <strain>cv. Nipponbare</strain>
    </source>
</reference>
<reference key="6">
    <citation type="journal article" date="2003" name="Science">
        <title>Collection, mapping, and annotation of over 28,000 cDNA clones from japonica rice.</title>
        <authorList>
            <consortium name="The rice full-length cDNA consortium"/>
        </authorList>
    </citation>
    <scope>NUCLEOTIDE SEQUENCE [LARGE SCALE MRNA] (ISOFORM 2)</scope>
    <source>
        <strain>cv. Nipponbare</strain>
    </source>
</reference>
<proteinExistence type="evidence at transcript level"/>
<dbReference type="EMBL" id="D17788">
    <property type="protein sequence ID" value="BAA04614.1"/>
    <property type="molecule type" value="mRNA"/>
</dbReference>
<dbReference type="EMBL" id="AB037155">
    <property type="protein sequence ID" value="BAB78492.1"/>
    <property type="molecule type" value="mRNA"/>
</dbReference>
<dbReference type="EMBL" id="AP005056">
    <property type="protein sequence ID" value="BAD36042.1"/>
    <property type="molecule type" value="Genomic_DNA"/>
</dbReference>
<dbReference type="EMBL" id="AP005056">
    <property type="protein sequence ID" value="BAD36043.1"/>
    <property type="molecule type" value="Genomic_DNA"/>
</dbReference>
<dbReference type="EMBL" id="AP008208">
    <property type="protein sequence ID" value="BAF10342.1"/>
    <property type="molecule type" value="Genomic_DNA"/>
</dbReference>
<dbReference type="EMBL" id="AP014958">
    <property type="protein sequence ID" value="BAS81442.1"/>
    <property type="molecule type" value="Genomic_DNA"/>
</dbReference>
<dbReference type="EMBL" id="AK067051">
    <property type="status" value="NOT_ANNOTATED_CDS"/>
    <property type="molecule type" value="mRNA"/>
</dbReference>
<dbReference type="EMBL" id="AK103936">
    <property type="protein sequence ID" value="BAG96331.1"/>
    <property type="molecule type" value="mRNA"/>
</dbReference>
<dbReference type="RefSeq" id="XP_015625151.1">
    <property type="nucleotide sequence ID" value="XM_015769665.1"/>
</dbReference>
<dbReference type="SMR" id="P46465"/>
<dbReference type="FunCoup" id="P46465">
    <property type="interactions" value="2083"/>
</dbReference>
<dbReference type="STRING" id="39947.P46465"/>
<dbReference type="PaxDb" id="39947-P46465"/>
<dbReference type="EnsemblPlants" id="Os02t0803700-01">
    <molecule id="P46465-1"/>
    <property type="protein sequence ID" value="Os02t0803700-01"/>
    <property type="gene ID" value="Os02g0803700"/>
</dbReference>
<dbReference type="Gramene" id="Os02t0803700-01">
    <molecule id="P46465-1"/>
    <property type="protein sequence ID" value="Os02t0803700-01"/>
    <property type="gene ID" value="Os02g0803700"/>
</dbReference>
<dbReference type="KEGG" id="dosa:Os02g0803700"/>
<dbReference type="eggNOG" id="KOG0652">
    <property type="taxonomic scope" value="Eukaryota"/>
</dbReference>
<dbReference type="HOGENOM" id="CLU_000688_2_4_1"/>
<dbReference type="InParanoid" id="P46465"/>
<dbReference type="OMA" id="EFPHPND"/>
<dbReference type="OrthoDB" id="6416264at2759"/>
<dbReference type="Proteomes" id="UP000000763">
    <property type="component" value="Chromosome 2"/>
</dbReference>
<dbReference type="Proteomes" id="UP000059680">
    <property type="component" value="Chromosome 2"/>
</dbReference>
<dbReference type="ExpressionAtlas" id="P46465">
    <property type="expression patterns" value="baseline and differential"/>
</dbReference>
<dbReference type="GO" id="GO:0005737">
    <property type="term" value="C:cytoplasm"/>
    <property type="evidence" value="ECO:0007669"/>
    <property type="project" value="UniProtKB-SubCell"/>
</dbReference>
<dbReference type="GO" id="GO:0005634">
    <property type="term" value="C:nucleus"/>
    <property type="evidence" value="ECO:0007669"/>
    <property type="project" value="UniProtKB-SubCell"/>
</dbReference>
<dbReference type="GO" id="GO:0008540">
    <property type="term" value="C:proteasome regulatory particle, base subcomplex"/>
    <property type="evidence" value="ECO:0000318"/>
    <property type="project" value="GO_Central"/>
</dbReference>
<dbReference type="GO" id="GO:0005524">
    <property type="term" value="F:ATP binding"/>
    <property type="evidence" value="ECO:0007669"/>
    <property type="project" value="UniProtKB-KW"/>
</dbReference>
<dbReference type="GO" id="GO:0016887">
    <property type="term" value="F:ATP hydrolysis activity"/>
    <property type="evidence" value="ECO:0007669"/>
    <property type="project" value="InterPro"/>
</dbReference>
<dbReference type="GO" id="GO:0036402">
    <property type="term" value="F:proteasome-activating activity"/>
    <property type="evidence" value="ECO:0000318"/>
    <property type="project" value="GO_Central"/>
</dbReference>
<dbReference type="GO" id="GO:0043161">
    <property type="term" value="P:proteasome-mediated ubiquitin-dependent protein catabolic process"/>
    <property type="evidence" value="ECO:0000318"/>
    <property type="project" value="GO_Central"/>
</dbReference>
<dbReference type="FunFam" id="1.10.8.60:FF:000009">
    <property type="entry name" value="26S protease regulatory subunit 6A"/>
    <property type="match status" value="1"/>
</dbReference>
<dbReference type="FunFam" id="2.40.50.140:FF:000076">
    <property type="entry name" value="26S protease regulatory subunit 6A"/>
    <property type="match status" value="1"/>
</dbReference>
<dbReference type="FunFam" id="3.40.50.300:FF:000037">
    <property type="entry name" value="26S protease regulatory subunit 6A"/>
    <property type="match status" value="1"/>
</dbReference>
<dbReference type="Gene3D" id="1.10.8.60">
    <property type="match status" value="1"/>
</dbReference>
<dbReference type="Gene3D" id="2.40.50.140">
    <property type="entry name" value="Nucleic acid-binding proteins"/>
    <property type="match status" value="1"/>
</dbReference>
<dbReference type="Gene3D" id="3.40.50.300">
    <property type="entry name" value="P-loop containing nucleotide triphosphate hydrolases"/>
    <property type="match status" value="1"/>
</dbReference>
<dbReference type="InterPro" id="IPR050221">
    <property type="entry name" value="26S_Proteasome_ATPase"/>
</dbReference>
<dbReference type="InterPro" id="IPR003593">
    <property type="entry name" value="AAA+_ATPase"/>
</dbReference>
<dbReference type="InterPro" id="IPR041569">
    <property type="entry name" value="AAA_lid_3"/>
</dbReference>
<dbReference type="InterPro" id="IPR003959">
    <property type="entry name" value="ATPase_AAA_core"/>
</dbReference>
<dbReference type="InterPro" id="IPR003960">
    <property type="entry name" value="ATPase_AAA_CS"/>
</dbReference>
<dbReference type="InterPro" id="IPR012340">
    <property type="entry name" value="NA-bd_OB-fold"/>
</dbReference>
<dbReference type="InterPro" id="IPR027417">
    <property type="entry name" value="P-loop_NTPase"/>
</dbReference>
<dbReference type="InterPro" id="IPR032501">
    <property type="entry name" value="Prot_ATP_ID_OB_2nd"/>
</dbReference>
<dbReference type="PANTHER" id="PTHR23073">
    <property type="entry name" value="26S PROTEASOME REGULATORY SUBUNIT"/>
    <property type="match status" value="1"/>
</dbReference>
<dbReference type="Pfam" id="PF00004">
    <property type="entry name" value="AAA"/>
    <property type="match status" value="1"/>
</dbReference>
<dbReference type="Pfam" id="PF17862">
    <property type="entry name" value="AAA_lid_3"/>
    <property type="match status" value="1"/>
</dbReference>
<dbReference type="Pfam" id="PF16450">
    <property type="entry name" value="Prot_ATP_ID_OB_C"/>
    <property type="match status" value="1"/>
</dbReference>
<dbReference type="SMART" id="SM00382">
    <property type="entry name" value="AAA"/>
    <property type="match status" value="1"/>
</dbReference>
<dbReference type="SUPFAM" id="SSF52540">
    <property type="entry name" value="P-loop containing nucleoside triphosphate hydrolases"/>
    <property type="match status" value="1"/>
</dbReference>
<dbReference type="PROSITE" id="PS00674">
    <property type="entry name" value="AAA"/>
    <property type="match status" value="1"/>
</dbReference>
<organism>
    <name type="scientific">Oryza sativa subsp. japonica</name>
    <name type="common">Rice</name>
    <dbReference type="NCBI Taxonomy" id="39947"/>
    <lineage>
        <taxon>Eukaryota</taxon>
        <taxon>Viridiplantae</taxon>
        <taxon>Streptophyta</taxon>
        <taxon>Embryophyta</taxon>
        <taxon>Tracheophyta</taxon>
        <taxon>Spermatophyta</taxon>
        <taxon>Magnoliopsida</taxon>
        <taxon>Liliopsida</taxon>
        <taxon>Poales</taxon>
        <taxon>Poaceae</taxon>
        <taxon>BOP clade</taxon>
        <taxon>Oryzoideae</taxon>
        <taxon>Oryzeae</taxon>
        <taxon>Oryzinae</taxon>
        <taxon>Oryza</taxon>
        <taxon>Oryza sativa</taxon>
    </lineage>
</organism>